<protein>
    <recommendedName>
        <fullName evidence="1">2,3,4,5-tetrahydropyridine-2,6-dicarboxylate N-succinyltransferase</fullName>
        <ecNumber evidence="1">2.3.1.117</ecNumber>
    </recommendedName>
    <alternativeName>
        <fullName evidence="1">Tetrahydrodipicolinate N-succinyltransferase</fullName>
        <shortName evidence="1">THDP succinyltransferase</shortName>
        <shortName evidence="1">THP succinyltransferase</shortName>
    </alternativeName>
    <alternativeName>
        <fullName evidence="1">Tetrahydropicolinate succinylase</fullName>
    </alternativeName>
</protein>
<gene>
    <name evidence="1" type="primary">dapD</name>
    <name type="ordered locus">SCO1916</name>
    <name type="ORF">SCI7.34c</name>
</gene>
<reference key="1">
    <citation type="journal article" date="2002" name="Nature">
        <title>Complete genome sequence of the model actinomycete Streptomyces coelicolor A3(2).</title>
        <authorList>
            <person name="Bentley S.D."/>
            <person name="Chater K.F."/>
            <person name="Cerdeno-Tarraga A.-M."/>
            <person name="Challis G.L."/>
            <person name="Thomson N.R."/>
            <person name="James K.D."/>
            <person name="Harris D.E."/>
            <person name="Quail M.A."/>
            <person name="Kieser H."/>
            <person name="Harper D."/>
            <person name="Bateman A."/>
            <person name="Brown S."/>
            <person name="Chandra G."/>
            <person name="Chen C.W."/>
            <person name="Collins M."/>
            <person name="Cronin A."/>
            <person name="Fraser A."/>
            <person name="Goble A."/>
            <person name="Hidalgo J."/>
            <person name="Hornsby T."/>
            <person name="Howarth S."/>
            <person name="Huang C.-H."/>
            <person name="Kieser T."/>
            <person name="Larke L."/>
            <person name="Murphy L.D."/>
            <person name="Oliver K."/>
            <person name="O'Neil S."/>
            <person name="Rabbinowitsch E."/>
            <person name="Rajandream M.A."/>
            <person name="Rutherford K.M."/>
            <person name="Rutter S."/>
            <person name="Seeger K."/>
            <person name="Saunders D."/>
            <person name="Sharp S."/>
            <person name="Squares R."/>
            <person name="Squares S."/>
            <person name="Taylor K."/>
            <person name="Warren T."/>
            <person name="Wietzorrek A."/>
            <person name="Woodward J.R."/>
            <person name="Barrell B.G."/>
            <person name="Parkhill J."/>
            <person name="Hopwood D.A."/>
        </authorList>
    </citation>
    <scope>NUCLEOTIDE SEQUENCE [LARGE SCALE GENOMIC DNA]</scope>
    <source>
        <strain>ATCC BAA-471 / A3(2) / M145</strain>
    </source>
</reference>
<dbReference type="EC" id="2.3.1.117" evidence="1"/>
<dbReference type="EMBL" id="AL939110">
    <property type="protein sequence ID" value="CAB46417.1"/>
    <property type="molecule type" value="Genomic_DNA"/>
</dbReference>
<dbReference type="PIR" id="T36930">
    <property type="entry name" value="T36930"/>
</dbReference>
<dbReference type="RefSeq" id="NP_626182.1">
    <property type="nucleotide sequence ID" value="NC_003888.3"/>
</dbReference>
<dbReference type="RefSeq" id="WP_003976903.1">
    <property type="nucleotide sequence ID" value="NZ_VNID01000001.1"/>
</dbReference>
<dbReference type="SMR" id="Q9X9V6"/>
<dbReference type="FunCoup" id="Q9X9V6">
    <property type="interactions" value="110"/>
</dbReference>
<dbReference type="STRING" id="100226.gene:17759513"/>
<dbReference type="PaxDb" id="100226-SCO1916"/>
<dbReference type="GeneID" id="91387091"/>
<dbReference type="KEGG" id="sco:SCO1916"/>
<dbReference type="PATRIC" id="fig|100226.15.peg.1942"/>
<dbReference type="eggNOG" id="COG2171">
    <property type="taxonomic scope" value="Bacteria"/>
</dbReference>
<dbReference type="HOGENOM" id="CLU_057490_1_0_11"/>
<dbReference type="InParanoid" id="Q9X9V6"/>
<dbReference type="OrthoDB" id="9782799at2"/>
<dbReference type="PhylomeDB" id="Q9X9V6"/>
<dbReference type="UniPathway" id="UPA00034">
    <property type="reaction ID" value="UER00019"/>
</dbReference>
<dbReference type="Proteomes" id="UP000001973">
    <property type="component" value="Chromosome"/>
</dbReference>
<dbReference type="GO" id="GO:0005737">
    <property type="term" value="C:cytoplasm"/>
    <property type="evidence" value="ECO:0007669"/>
    <property type="project" value="UniProtKB-SubCell"/>
</dbReference>
<dbReference type="GO" id="GO:0008666">
    <property type="term" value="F:2,3,4,5-tetrahydropyridine-2,6-dicarboxylate N-succinyltransferase activity"/>
    <property type="evidence" value="ECO:0007669"/>
    <property type="project" value="UniProtKB-UniRule"/>
</dbReference>
<dbReference type="GO" id="GO:0000287">
    <property type="term" value="F:magnesium ion binding"/>
    <property type="evidence" value="ECO:0007669"/>
    <property type="project" value="UniProtKB-UniRule"/>
</dbReference>
<dbReference type="GO" id="GO:0019877">
    <property type="term" value="P:diaminopimelate biosynthetic process"/>
    <property type="evidence" value="ECO:0007669"/>
    <property type="project" value="UniProtKB-UniRule"/>
</dbReference>
<dbReference type="GO" id="GO:0009089">
    <property type="term" value="P:lysine biosynthetic process via diaminopimelate"/>
    <property type="evidence" value="ECO:0007669"/>
    <property type="project" value="UniProtKB-UniRule"/>
</dbReference>
<dbReference type="CDD" id="cd04649">
    <property type="entry name" value="LbH_THP_succinylT_putative"/>
    <property type="match status" value="1"/>
</dbReference>
<dbReference type="Gene3D" id="3.30.70.2010">
    <property type="match status" value="1"/>
</dbReference>
<dbReference type="Gene3D" id="2.160.10.10">
    <property type="entry name" value="Hexapeptide repeat proteins"/>
    <property type="match status" value="1"/>
</dbReference>
<dbReference type="Gene3D" id="3.30.60.70">
    <property type="entry name" value="Trimeric LpxA-like enzymes"/>
    <property type="match status" value="1"/>
</dbReference>
<dbReference type="HAMAP" id="MF_02122">
    <property type="entry name" value="DapD_type2"/>
    <property type="match status" value="1"/>
</dbReference>
<dbReference type="InterPro" id="IPR019875">
    <property type="entry name" value="DapD_actinobacteria"/>
</dbReference>
<dbReference type="InterPro" id="IPR001451">
    <property type="entry name" value="Hexapep"/>
</dbReference>
<dbReference type="InterPro" id="IPR032784">
    <property type="entry name" value="THDPS_M"/>
</dbReference>
<dbReference type="InterPro" id="IPR038361">
    <property type="entry name" value="THDPS_M_sf"/>
</dbReference>
<dbReference type="InterPro" id="IPR011004">
    <property type="entry name" value="Trimer_LpxA-like_sf"/>
</dbReference>
<dbReference type="InterPro" id="IPR026586">
    <property type="entry name" value="Type2_DapD"/>
</dbReference>
<dbReference type="NCBIfam" id="TIGR03535">
    <property type="entry name" value="DapD_actino"/>
    <property type="match status" value="1"/>
</dbReference>
<dbReference type="Pfam" id="PF14602">
    <property type="entry name" value="Hexapep_2"/>
    <property type="match status" value="1"/>
</dbReference>
<dbReference type="Pfam" id="PF14789">
    <property type="entry name" value="THDPS_M"/>
    <property type="match status" value="1"/>
</dbReference>
<dbReference type="SUPFAM" id="SSF51161">
    <property type="entry name" value="Trimeric LpxA-like enzymes"/>
    <property type="match status" value="1"/>
</dbReference>
<accession>Q9X9V6</accession>
<sequence length="329" mass="33932">MTDTTAPRTSGAVAAGLATIAADGTVLDTWFPAPELSDEPGPSGTERLTAEQAAELLGGGATAAVGPDARRGVEVVAVRTVISSLDEKPVDTHDVYLRLHLLSHRLVKPHGQSLDGIFAHLANVAWTSLGPVAVDDIEKVRLNARAEGLHLQVTSIDKFPRMTDYVAPKGVRIADADRVRLGAHLSAGTTVMHEGFVNFNAGTLGTSMVEGRISAGVVVGDGSDIGGGASTMGTLSGGGNVRIVIGERCLVGAEAGVGIALGDECVVEAGLYVTAGTRVTMPDGQVVKARELSGASNILFRRNSVTGTVEARPNNAVWGGLNEILHSHN</sequence>
<name>DAPD_STRCO</name>
<keyword id="KW-0012">Acyltransferase</keyword>
<keyword id="KW-0028">Amino-acid biosynthesis</keyword>
<keyword id="KW-0963">Cytoplasm</keyword>
<keyword id="KW-0220">Diaminopimelate biosynthesis</keyword>
<keyword id="KW-0457">Lysine biosynthesis</keyword>
<keyword id="KW-0460">Magnesium</keyword>
<keyword id="KW-0479">Metal-binding</keyword>
<keyword id="KW-1185">Reference proteome</keyword>
<keyword id="KW-0808">Transferase</keyword>
<comment type="function">
    <text evidence="1">Catalyzes the conversion of the cyclic tetrahydrodipicolinate (THDP) into the acyclic N-succinyl-L-2-amino-6-oxopimelate using succinyl-CoA.</text>
</comment>
<comment type="catalytic activity">
    <reaction evidence="1">
        <text>(S)-2,3,4,5-tetrahydrodipicolinate + succinyl-CoA + H2O = (S)-2-succinylamino-6-oxoheptanedioate + CoA</text>
        <dbReference type="Rhea" id="RHEA:17325"/>
        <dbReference type="ChEBI" id="CHEBI:15377"/>
        <dbReference type="ChEBI" id="CHEBI:15685"/>
        <dbReference type="ChEBI" id="CHEBI:16845"/>
        <dbReference type="ChEBI" id="CHEBI:57287"/>
        <dbReference type="ChEBI" id="CHEBI:57292"/>
        <dbReference type="EC" id="2.3.1.117"/>
    </reaction>
</comment>
<comment type="pathway">
    <text evidence="1">Amino-acid biosynthesis; L-lysine biosynthesis via DAP pathway; LL-2,6-diaminopimelate from (S)-tetrahydrodipicolinate (succinylase route): step 1/3.</text>
</comment>
<comment type="subunit">
    <text evidence="1">Homotrimer.</text>
</comment>
<comment type="subcellular location">
    <subcellularLocation>
        <location evidence="1">Cytoplasm</location>
    </subcellularLocation>
</comment>
<comment type="similarity">
    <text evidence="1">Belongs to the type 2 tetrahydrodipicolinate N-succinyltransferase family.</text>
</comment>
<proteinExistence type="inferred from homology"/>
<feature type="chain" id="PRO_0000412269" description="2,3,4,5-tetrahydropyridine-2,6-dicarboxylate N-succinyltransferase">
    <location>
        <begin position="1"/>
        <end position="329"/>
    </location>
</feature>
<feature type="active site" description="Acyl-anhydride intermediate" evidence="1">
    <location>
        <position position="210"/>
    </location>
</feature>
<feature type="binding site" evidence="1">
    <location>
        <position position="177"/>
    </location>
    <ligand>
        <name>Mg(2+)</name>
        <dbReference type="ChEBI" id="CHEBI:18420"/>
        <label>1</label>
        <note>ligand shared between trimeric partners</note>
    </ligand>
</feature>
<feature type="binding site" evidence="1">
    <location>
        <position position="194"/>
    </location>
    <ligand>
        <name>Mg(2+)</name>
        <dbReference type="ChEBI" id="CHEBI:18420"/>
        <label>2</label>
        <note>ligand shared between trimeric partners</note>
    </ligand>
</feature>
<feature type="binding site" evidence="1">
    <location>
        <position position="212"/>
    </location>
    <ligand>
        <name>succinyl-CoA</name>
        <dbReference type="ChEBI" id="CHEBI:57292"/>
    </ligand>
</feature>
<feature type="binding site" evidence="1">
    <location>
        <position position="227"/>
    </location>
    <ligand>
        <name>succinyl-CoA</name>
        <dbReference type="ChEBI" id="CHEBI:57292"/>
    </ligand>
</feature>
<feature type="binding site" evidence="1">
    <location>
        <position position="230"/>
    </location>
    <ligand>
        <name>succinyl-CoA</name>
        <dbReference type="ChEBI" id="CHEBI:57292"/>
    </ligand>
</feature>
<feature type="binding site" evidence="1">
    <location>
        <position position="253"/>
    </location>
    <ligand>
        <name>succinyl-CoA</name>
        <dbReference type="ChEBI" id="CHEBI:57292"/>
    </ligand>
</feature>
<feature type="binding site" evidence="1">
    <location>
        <begin position="268"/>
        <end position="269"/>
    </location>
    <ligand>
        <name>succinyl-CoA</name>
        <dbReference type="ChEBI" id="CHEBI:57292"/>
    </ligand>
</feature>
<feature type="binding site" evidence="1">
    <location>
        <position position="276"/>
    </location>
    <ligand>
        <name>succinyl-CoA</name>
        <dbReference type="ChEBI" id="CHEBI:57292"/>
    </ligand>
</feature>
<feature type="binding site" evidence="1">
    <location>
        <position position="288"/>
    </location>
    <ligand>
        <name>succinyl-CoA</name>
        <dbReference type="ChEBI" id="CHEBI:57292"/>
    </ligand>
</feature>
<feature type="binding site" evidence="1">
    <location>
        <begin position="301"/>
        <end position="304"/>
    </location>
    <ligand>
        <name>succinyl-CoA</name>
        <dbReference type="ChEBI" id="CHEBI:57292"/>
    </ligand>
</feature>
<organism>
    <name type="scientific">Streptomyces coelicolor (strain ATCC BAA-471 / A3(2) / M145)</name>
    <dbReference type="NCBI Taxonomy" id="100226"/>
    <lineage>
        <taxon>Bacteria</taxon>
        <taxon>Bacillati</taxon>
        <taxon>Actinomycetota</taxon>
        <taxon>Actinomycetes</taxon>
        <taxon>Kitasatosporales</taxon>
        <taxon>Streptomycetaceae</taxon>
        <taxon>Streptomyces</taxon>
        <taxon>Streptomyces albidoflavus group</taxon>
    </lineage>
</organism>
<evidence type="ECO:0000255" key="1">
    <source>
        <dbReference type="HAMAP-Rule" id="MF_02122"/>
    </source>
</evidence>